<reference key="1">
    <citation type="journal article" date="2008" name="Antimicrob. Agents Chemother.">
        <title>Whole-genome pyrosequencing of an epidemic multidrug-resistant Acinetobacter baumannii strain belonging to the European clone II group.</title>
        <authorList>
            <person name="Iacono M."/>
            <person name="Villa L."/>
            <person name="Fortini D."/>
            <person name="Bordoni R."/>
            <person name="Imperi F."/>
            <person name="Bonnal R.J."/>
            <person name="Sicheritz-Ponten T."/>
            <person name="De Bellis G."/>
            <person name="Visca P."/>
            <person name="Cassone A."/>
            <person name="Carattoli A."/>
        </authorList>
    </citation>
    <scope>NUCLEOTIDE SEQUENCE [LARGE SCALE GENOMIC DNA]</scope>
    <source>
        <strain>ACICU</strain>
    </source>
</reference>
<evidence type="ECO:0000255" key="1">
    <source>
        <dbReference type="HAMAP-Rule" id="MF_00191"/>
    </source>
</evidence>
<feature type="chain" id="PRO_1000098923" description="4-hydroxy-3-methylbut-2-enyl diphosphate reductase">
    <location>
        <begin position="1"/>
        <end position="316"/>
    </location>
</feature>
<feature type="active site" description="Proton donor" evidence="1">
    <location>
        <position position="126"/>
    </location>
</feature>
<feature type="binding site" evidence="1">
    <location>
        <position position="12"/>
    </location>
    <ligand>
        <name>[4Fe-4S] cluster</name>
        <dbReference type="ChEBI" id="CHEBI:49883"/>
    </ligand>
</feature>
<feature type="binding site" evidence="1">
    <location>
        <position position="41"/>
    </location>
    <ligand>
        <name>(2E)-4-hydroxy-3-methylbut-2-enyl diphosphate</name>
        <dbReference type="ChEBI" id="CHEBI:128753"/>
    </ligand>
</feature>
<feature type="binding site" evidence="1">
    <location>
        <position position="41"/>
    </location>
    <ligand>
        <name>dimethylallyl diphosphate</name>
        <dbReference type="ChEBI" id="CHEBI:57623"/>
    </ligand>
</feature>
<feature type="binding site" evidence="1">
    <location>
        <position position="41"/>
    </location>
    <ligand>
        <name>isopentenyl diphosphate</name>
        <dbReference type="ChEBI" id="CHEBI:128769"/>
    </ligand>
</feature>
<feature type="binding site" evidence="1">
    <location>
        <position position="74"/>
    </location>
    <ligand>
        <name>(2E)-4-hydroxy-3-methylbut-2-enyl diphosphate</name>
        <dbReference type="ChEBI" id="CHEBI:128753"/>
    </ligand>
</feature>
<feature type="binding site" evidence="1">
    <location>
        <position position="74"/>
    </location>
    <ligand>
        <name>dimethylallyl diphosphate</name>
        <dbReference type="ChEBI" id="CHEBI:57623"/>
    </ligand>
</feature>
<feature type="binding site" evidence="1">
    <location>
        <position position="74"/>
    </location>
    <ligand>
        <name>isopentenyl diphosphate</name>
        <dbReference type="ChEBI" id="CHEBI:128769"/>
    </ligand>
</feature>
<feature type="binding site" evidence="1">
    <location>
        <position position="96"/>
    </location>
    <ligand>
        <name>[4Fe-4S] cluster</name>
        <dbReference type="ChEBI" id="CHEBI:49883"/>
    </ligand>
</feature>
<feature type="binding site" evidence="1">
    <location>
        <position position="124"/>
    </location>
    <ligand>
        <name>(2E)-4-hydroxy-3-methylbut-2-enyl diphosphate</name>
        <dbReference type="ChEBI" id="CHEBI:128753"/>
    </ligand>
</feature>
<feature type="binding site" evidence="1">
    <location>
        <position position="124"/>
    </location>
    <ligand>
        <name>dimethylallyl diphosphate</name>
        <dbReference type="ChEBI" id="CHEBI:57623"/>
    </ligand>
</feature>
<feature type="binding site" evidence="1">
    <location>
        <position position="124"/>
    </location>
    <ligand>
        <name>isopentenyl diphosphate</name>
        <dbReference type="ChEBI" id="CHEBI:128769"/>
    </ligand>
</feature>
<feature type="binding site" evidence="1">
    <location>
        <position position="168"/>
    </location>
    <ligand>
        <name>(2E)-4-hydroxy-3-methylbut-2-enyl diphosphate</name>
        <dbReference type="ChEBI" id="CHEBI:128753"/>
    </ligand>
</feature>
<feature type="binding site" evidence="1">
    <location>
        <position position="198"/>
    </location>
    <ligand>
        <name>[4Fe-4S] cluster</name>
        <dbReference type="ChEBI" id="CHEBI:49883"/>
    </ligand>
</feature>
<feature type="binding site" evidence="1">
    <location>
        <position position="226"/>
    </location>
    <ligand>
        <name>(2E)-4-hydroxy-3-methylbut-2-enyl diphosphate</name>
        <dbReference type="ChEBI" id="CHEBI:128753"/>
    </ligand>
</feature>
<feature type="binding site" evidence="1">
    <location>
        <position position="226"/>
    </location>
    <ligand>
        <name>dimethylallyl diphosphate</name>
        <dbReference type="ChEBI" id="CHEBI:57623"/>
    </ligand>
</feature>
<feature type="binding site" evidence="1">
    <location>
        <position position="226"/>
    </location>
    <ligand>
        <name>isopentenyl diphosphate</name>
        <dbReference type="ChEBI" id="CHEBI:128769"/>
    </ligand>
</feature>
<feature type="binding site" evidence="1">
    <location>
        <position position="227"/>
    </location>
    <ligand>
        <name>(2E)-4-hydroxy-3-methylbut-2-enyl diphosphate</name>
        <dbReference type="ChEBI" id="CHEBI:128753"/>
    </ligand>
</feature>
<feature type="binding site" evidence="1">
    <location>
        <position position="227"/>
    </location>
    <ligand>
        <name>dimethylallyl diphosphate</name>
        <dbReference type="ChEBI" id="CHEBI:57623"/>
    </ligand>
</feature>
<feature type="binding site" evidence="1">
    <location>
        <position position="227"/>
    </location>
    <ligand>
        <name>isopentenyl diphosphate</name>
        <dbReference type="ChEBI" id="CHEBI:128769"/>
    </ligand>
</feature>
<feature type="binding site" evidence="1">
    <location>
        <position position="228"/>
    </location>
    <ligand>
        <name>(2E)-4-hydroxy-3-methylbut-2-enyl diphosphate</name>
        <dbReference type="ChEBI" id="CHEBI:128753"/>
    </ligand>
</feature>
<feature type="binding site" evidence="1">
    <location>
        <position position="228"/>
    </location>
    <ligand>
        <name>dimethylallyl diphosphate</name>
        <dbReference type="ChEBI" id="CHEBI:57623"/>
    </ligand>
</feature>
<feature type="binding site" evidence="1">
    <location>
        <position position="228"/>
    </location>
    <ligand>
        <name>isopentenyl diphosphate</name>
        <dbReference type="ChEBI" id="CHEBI:128769"/>
    </ligand>
</feature>
<feature type="binding site" evidence="1">
    <location>
        <position position="270"/>
    </location>
    <ligand>
        <name>(2E)-4-hydroxy-3-methylbut-2-enyl diphosphate</name>
        <dbReference type="ChEBI" id="CHEBI:128753"/>
    </ligand>
</feature>
<feature type="binding site" evidence="1">
    <location>
        <position position="270"/>
    </location>
    <ligand>
        <name>dimethylallyl diphosphate</name>
        <dbReference type="ChEBI" id="CHEBI:57623"/>
    </ligand>
</feature>
<feature type="binding site" evidence="1">
    <location>
        <position position="270"/>
    </location>
    <ligand>
        <name>isopentenyl diphosphate</name>
        <dbReference type="ChEBI" id="CHEBI:128769"/>
    </ligand>
</feature>
<keyword id="KW-0004">4Fe-4S</keyword>
<keyword id="KW-0408">Iron</keyword>
<keyword id="KW-0411">Iron-sulfur</keyword>
<keyword id="KW-0414">Isoprene biosynthesis</keyword>
<keyword id="KW-0479">Metal-binding</keyword>
<keyword id="KW-0560">Oxidoreductase</keyword>
<protein>
    <recommendedName>
        <fullName evidence="1">4-hydroxy-3-methylbut-2-enyl diphosphate reductase</fullName>
        <shortName evidence="1">HMBPP reductase</shortName>
        <ecNumber evidence="1">1.17.7.4</ecNumber>
    </recommendedName>
</protein>
<accession>B2HZW3</accession>
<organism>
    <name type="scientific">Acinetobacter baumannii (strain ACICU)</name>
    <dbReference type="NCBI Taxonomy" id="405416"/>
    <lineage>
        <taxon>Bacteria</taxon>
        <taxon>Pseudomonadati</taxon>
        <taxon>Pseudomonadota</taxon>
        <taxon>Gammaproteobacteria</taxon>
        <taxon>Moraxellales</taxon>
        <taxon>Moraxellaceae</taxon>
        <taxon>Acinetobacter</taxon>
        <taxon>Acinetobacter calcoaceticus/baumannii complex</taxon>
    </lineage>
</organism>
<name>ISPH_ACIBC</name>
<gene>
    <name evidence="1" type="primary">ispH</name>
    <name type="ordered locus">ACICU_03371</name>
</gene>
<dbReference type="EC" id="1.17.7.4" evidence="1"/>
<dbReference type="EMBL" id="CP000863">
    <property type="protein sequence ID" value="ACC58681.1"/>
    <property type="molecule type" value="Genomic_DNA"/>
</dbReference>
<dbReference type="RefSeq" id="WP_000407064.1">
    <property type="nucleotide sequence ID" value="NZ_CP031380.1"/>
</dbReference>
<dbReference type="SMR" id="B2HZW3"/>
<dbReference type="GeneID" id="92895407"/>
<dbReference type="KEGG" id="abc:ACICU_03371"/>
<dbReference type="HOGENOM" id="CLU_027486_1_0_6"/>
<dbReference type="UniPathway" id="UPA00056">
    <property type="reaction ID" value="UER00097"/>
</dbReference>
<dbReference type="UniPathway" id="UPA00059">
    <property type="reaction ID" value="UER00105"/>
</dbReference>
<dbReference type="Proteomes" id="UP000008839">
    <property type="component" value="Chromosome"/>
</dbReference>
<dbReference type="GO" id="GO:0051539">
    <property type="term" value="F:4 iron, 4 sulfur cluster binding"/>
    <property type="evidence" value="ECO:0007669"/>
    <property type="project" value="UniProtKB-UniRule"/>
</dbReference>
<dbReference type="GO" id="GO:0051745">
    <property type="term" value="F:4-hydroxy-3-methylbut-2-enyl diphosphate reductase activity"/>
    <property type="evidence" value="ECO:0007669"/>
    <property type="project" value="UniProtKB-UniRule"/>
</dbReference>
<dbReference type="GO" id="GO:0046872">
    <property type="term" value="F:metal ion binding"/>
    <property type="evidence" value="ECO:0007669"/>
    <property type="project" value="UniProtKB-KW"/>
</dbReference>
<dbReference type="GO" id="GO:0050992">
    <property type="term" value="P:dimethylallyl diphosphate biosynthetic process"/>
    <property type="evidence" value="ECO:0007669"/>
    <property type="project" value="UniProtKB-UniRule"/>
</dbReference>
<dbReference type="GO" id="GO:0019288">
    <property type="term" value="P:isopentenyl diphosphate biosynthetic process, methylerythritol 4-phosphate pathway"/>
    <property type="evidence" value="ECO:0007669"/>
    <property type="project" value="UniProtKB-UniRule"/>
</dbReference>
<dbReference type="GO" id="GO:0016114">
    <property type="term" value="P:terpenoid biosynthetic process"/>
    <property type="evidence" value="ECO:0007669"/>
    <property type="project" value="UniProtKB-UniRule"/>
</dbReference>
<dbReference type="CDD" id="cd13944">
    <property type="entry name" value="lytB_ispH"/>
    <property type="match status" value="1"/>
</dbReference>
<dbReference type="Gene3D" id="3.40.50.11270">
    <property type="match status" value="1"/>
</dbReference>
<dbReference type="Gene3D" id="3.40.1010.20">
    <property type="entry name" value="4-hydroxy-3-methylbut-2-enyl diphosphate reductase, catalytic domain"/>
    <property type="match status" value="2"/>
</dbReference>
<dbReference type="HAMAP" id="MF_00191">
    <property type="entry name" value="IspH"/>
    <property type="match status" value="1"/>
</dbReference>
<dbReference type="InterPro" id="IPR003451">
    <property type="entry name" value="LytB/IspH"/>
</dbReference>
<dbReference type="NCBIfam" id="TIGR00216">
    <property type="entry name" value="ispH_lytB"/>
    <property type="match status" value="1"/>
</dbReference>
<dbReference type="NCBIfam" id="NF002188">
    <property type="entry name" value="PRK01045.1-2"/>
    <property type="match status" value="1"/>
</dbReference>
<dbReference type="NCBIfam" id="NF002190">
    <property type="entry name" value="PRK01045.1-4"/>
    <property type="match status" value="1"/>
</dbReference>
<dbReference type="PANTHER" id="PTHR30426">
    <property type="entry name" value="4-HYDROXY-3-METHYLBUT-2-ENYL DIPHOSPHATE REDUCTASE"/>
    <property type="match status" value="1"/>
</dbReference>
<dbReference type="PANTHER" id="PTHR30426:SF0">
    <property type="entry name" value="4-HYDROXY-3-METHYLBUT-2-ENYL DIPHOSPHATE REDUCTASE"/>
    <property type="match status" value="1"/>
</dbReference>
<dbReference type="Pfam" id="PF02401">
    <property type="entry name" value="LYTB"/>
    <property type="match status" value="1"/>
</dbReference>
<proteinExistence type="inferred from homology"/>
<sequence>MEIVLANPRGFCAGVDRAIAIVNRALECFNPPIYVRHEVVHNKFVVDDLRQRGAVFVDELDQVPDDSIVIFSAHGVSKAVQQEAERRGLKVFDATCPLVTKVHIEVTKYAREGTEAILIGHEGHPEVEGTMGQYDKLKGGDIYLVEDEADVAALEVRHPEKLAFVTQTTLSIDDTAKVIDALRAKFPNIQGPRKDDICYATQNRQDAVRDLAEKCDVVLVVGSPNSSNSNRLRELAERMGKAAYLVDNADQLEQSWFNDTCKIGVTAGASAPEILIKQVIQRLQDWGAQAPKELEGREENITFSLPKELRIHVTQA</sequence>
<comment type="function">
    <text evidence="1">Catalyzes the conversion of 1-hydroxy-2-methyl-2-(E)-butenyl 4-diphosphate (HMBPP) into a mixture of isopentenyl diphosphate (IPP) and dimethylallyl diphosphate (DMAPP). Acts in the terminal step of the DOXP/MEP pathway for isoprenoid precursor biosynthesis.</text>
</comment>
<comment type="catalytic activity">
    <reaction evidence="1">
        <text>isopentenyl diphosphate + 2 oxidized [2Fe-2S]-[ferredoxin] + H2O = (2E)-4-hydroxy-3-methylbut-2-enyl diphosphate + 2 reduced [2Fe-2S]-[ferredoxin] + 2 H(+)</text>
        <dbReference type="Rhea" id="RHEA:24488"/>
        <dbReference type="Rhea" id="RHEA-COMP:10000"/>
        <dbReference type="Rhea" id="RHEA-COMP:10001"/>
        <dbReference type="ChEBI" id="CHEBI:15377"/>
        <dbReference type="ChEBI" id="CHEBI:15378"/>
        <dbReference type="ChEBI" id="CHEBI:33737"/>
        <dbReference type="ChEBI" id="CHEBI:33738"/>
        <dbReference type="ChEBI" id="CHEBI:128753"/>
        <dbReference type="ChEBI" id="CHEBI:128769"/>
        <dbReference type="EC" id="1.17.7.4"/>
    </reaction>
</comment>
<comment type="catalytic activity">
    <reaction evidence="1">
        <text>dimethylallyl diphosphate + 2 oxidized [2Fe-2S]-[ferredoxin] + H2O = (2E)-4-hydroxy-3-methylbut-2-enyl diphosphate + 2 reduced [2Fe-2S]-[ferredoxin] + 2 H(+)</text>
        <dbReference type="Rhea" id="RHEA:24825"/>
        <dbReference type="Rhea" id="RHEA-COMP:10000"/>
        <dbReference type="Rhea" id="RHEA-COMP:10001"/>
        <dbReference type="ChEBI" id="CHEBI:15377"/>
        <dbReference type="ChEBI" id="CHEBI:15378"/>
        <dbReference type="ChEBI" id="CHEBI:33737"/>
        <dbReference type="ChEBI" id="CHEBI:33738"/>
        <dbReference type="ChEBI" id="CHEBI:57623"/>
        <dbReference type="ChEBI" id="CHEBI:128753"/>
        <dbReference type="EC" id="1.17.7.4"/>
    </reaction>
</comment>
<comment type="cofactor">
    <cofactor evidence="1">
        <name>[4Fe-4S] cluster</name>
        <dbReference type="ChEBI" id="CHEBI:49883"/>
    </cofactor>
    <text evidence="1">Binds 1 [4Fe-4S] cluster per subunit.</text>
</comment>
<comment type="pathway">
    <text evidence="1">Isoprenoid biosynthesis; dimethylallyl diphosphate biosynthesis; dimethylallyl diphosphate from (2E)-4-hydroxy-3-methylbutenyl diphosphate: step 1/1.</text>
</comment>
<comment type="pathway">
    <text evidence="1">Isoprenoid biosynthesis; isopentenyl diphosphate biosynthesis via DXP pathway; isopentenyl diphosphate from 1-deoxy-D-xylulose 5-phosphate: step 6/6.</text>
</comment>
<comment type="similarity">
    <text evidence="1">Belongs to the IspH family.</text>
</comment>